<gene>
    <name evidence="1" type="primary">lpxK</name>
    <name type="ordered locus">FTH_1608</name>
</gene>
<sequence>MLDKIWYRSKPNLLSRVLQPISLVFIDIANKRKIKQQLKQYKSKIPIIVVGNISVGGTGKTPVVRMLVQQYLAQDKKPAIISRGYGAKADNYPFEVTSGTLATQCGDEPAMLFDALQAQVPIVIAPERVQAVKYIEKNFPDTDIIMSDDGLQHYKLARDKEIVVVDAIRMFGNKLCLPAGPLREPIERLKEVDQIIVIGNCSDKDKELLKNYKNVTYAKVVATEFVNILTAKKVAKTEFNHQNAIAIAGIGNPTKFFKTLEESAINITAKKVFKDHHKFTQSDFEGIDSDITVVMTYKDAIKCKNFAKANWWYLDIALDINV</sequence>
<name>LPXK_FRATO</name>
<reference key="1">
    <citation type="journal article" date="2006" name="J. Bacteriol.">
        <title>Chromosome rearrangement and diversification of Francisella tularensis revealed by the type B (OSU18) genome sequence.</title>
        <authorList>
            <person name="Petrosino J.F."/>
            <person name="Xiang Q."/>
            <person name="Karpathy S.E."/>
            <person name="Jiang H."/>
            <person name="Yerrapragada S."/>
            <person name="Liu Y."/>
            <person name="Gioia J."/>
            <person name="Hemphill L."/>
            <person name="Gonzalez A."/>
            <person name="Raghavan T.M."/>
            <person name="Uzman A."/>
            <person name="Fox G.E."/>
            <person name="Highlander S."/>
            <person name="Reichard M."/>
            <person name="Morton R.J."/>
            <person name="Clinkenbeard K.D."/>
            <person name="Weinstock G.M."/>
        </authorList>
    </citation>
    <scope>NUCLEOTIDE SEQUENCE [LARGE SCALE GENOMIC DNA]</scope>
    <source>
        <strain>OSU18</strain>
    </source>
</reference>
<dbReference type="EC" id="2.7.1.130" evidence="1"/>
<dbReference type="EMBL" id="CP000437">
    <property type="protein sequence ID" value="ABI83390.1"/>
    <property type="molecule type" value="Genomic_DNA"/>
</dbReference>
<dbReference type="RefSeq" id="WP_003017106.1">
    <property type="nucleotide sequence ID" value="NC_017463.1"/>
</dbReference>
<dbReference type="SMR" id="Q0BKJ4"/>
<dbReference type="KEGG" id="fth:FTH_1608"/>
<dbReference type="UniPathway" id="UPA00359">
    <property type="reaction ID" value="UER00482"/>
</dbReference>
<dbReference type="GO" id="GO:0005886">
    <property type="term" value="C:plasma membrane"/>
    <property type="evidence" value="ECO:0007669"/>
    <property type="project" value="TreeGrafter"/>
</dbReference>
<dbReference type="GO" id="GO:0005524">
    <property type="term" value="F:ATP binding"/>
    <property type="evidence" value="ECO:0007669"/>
    <property type="project" value="UniProtKB-UniRule"/>
</dbReference>
<dbReference type="GO" id="GO:0009029">
    <property type="term" value="F:tetraacyldisaccharide 4'-kinase activity"/>
    <property type="evidence" value="ECO:0007669"/>
    <property type="project" value="UniProtKB-UniRule"/>
</dbReference>
<dbReference type="GO" id="GO:0009245">
    <property type="term" value="P:lipid A biosynthetic process"/>
    <property type="evidence" value="ECO:0007669"/>
    <property type="project" value="UniProtKB-UniRule"/>
</dbReference>
<dbReference type="GO" id="GO:0009244">
    <property type="term" value="P:lipopolysaccharide core region biosynthetic process"/>
    <property type="evidence" value="ECO:0007669"/>
    <property type="project" value="TreeGrafter"/>
</dbReference>
<dbReference type="HAMAP" id="MF_00409">
    <property type="entry name" value="LpxK"/>
    <property type="match status" value="1"/>
</dbReference>
<dbReference type="InterPro" id="IPR003758">
    <property type="entry name" value="LpxK"/>
</dbReference>
<dbReference type="InterPro" id="IPR027417">
    <property type="entry name" value="P-loop_NTPase"/>
</dbReference>
<dbReference type="NCBIfam" id="TIGR00682">
    <property type="entry name" value="lpxK"/>
    <property type="match status" value="1"/>
</dbReference>
<dbReference type="PANTHER" id="PTHR42724">
    <property type="entry name" value="TETRAACYLDISACCHARIDE 4'-KINASE"/>
    <property type="match status" value="1"/>
</dbReference>
<dbReference type="PANTHER" id="PTHR42724:SF1">
    <property type="entry name" value="TETRAACYLDISACCHARIDE 4'-KINASE, MITOCHONDRIAL-RELATED"/>
    <property type="match status" value="1"/>
</dbReference>
<dbReference type="Pfam" id="PF02606">
    <property type="entry name" value="LpxK"/>
    <property type="match status" value="1"/>
</dbReference>
<dbReference type="SUPFAM" id="SSF52540">
    <property type="entry name" value="P-loop containing nucleoside triphosphate hydrolases"/>
    <property type="match status" value="1"/>
</dbReference>
<comment type="function">
    <text evidence="1">Transfers the gamma-phosphate of ATP to the 4'-position of a tetraacyldisaccharide 1-phosphate intermediate (termed DS-1-P) to form tetraacyldisaccharide 1,4'-bis-phosphate (lipid IVA).</text>
</comment>
<comment type="catalytic activity">
    <reaction evidence="1">
        <text>a lipid A disaccharide + ATP = a lipid IVA + ADP + H(+)</text>
        <dbReference type="Rhea" id="RHEA:67840"/>
        <dbReference type="ChEBI" id="CHEBI:15378"/>
        <dbReference type="ChEBI" id="CHEBI:30616"/>
        <dbReference type="ChEBI" id="CHEBI:176343"/>
        <dbReference type="ChEBI" id="CHEBI:176425"/>
        <dbReference type="ChEBI" id="CHEBI:456216"/>
        <dbReference type="EC" id="2.7.1.130"/>
    </reaction>
</comment>
<comment type="pathway">
    <text evidence="1">Glycolipid biosynthesis; lipid IV(A) biosynthesis; lipid IV(A) from (3R)-3-hydroxytetradecanoyl-[acyl-carrier-protein] and UDP-N-acetyl-alpha-D-glucosamine: step 6/6.</text>
</comment>
<comment type="similarity">
    <text evidence="1">Belongs to the LpxK family.</text>
</comment>
<organism>
    <name type="scientific">Francisella tularensis subsp. holarctica (strain OSU18)</name>
    <dbReference type="NCBI Taxonomy" id="393011"/>
    <lineage>
        <taxon>Bacteria</taxon>
        <taxon>Pseudomonadati</taxon>
        <taxon>Pseudomonadota</taxon>
        <taxon>Gammaproteobacteria</taxon>
        <taxon>Thiotrichales</taxon>
        <taxon>Francisellaceae</taxon>
        <taxon>Francisella</taxon>
    </lineage>
</organism>
<evidence type="ECO:0000255" key="1">
    <source>
        <dbReference type="HAMAP-Rule" id="MF_00409"/>
    </source>
</evidence>
<keyword id="KW-0067">ATP-binding</keyword>
<keyword id="KW-0418">Kinase</keyword>
<keyword id="KW-0441">Lipid A biosynthesis</keyword>
<keyword id="KW-0444">Lipid biosynthesis</keyword>
<keyword id="KW-0443">Lipid metabolism</keyword>
<keyword id="KW-0547">Nucleotide-binding</keyword>
<keyword id="KW-0808">Transferase</keyword>
<protein>
    <recommendedName>
        <fullName evidence="1">Tetraacyldisaccharide 4'-kinase</fullName>
        <ecNumber evidence="1">2.7.1.130</ecNumber>
    </recommendedName>
    <alternativeName>
        <fullName evidence="1">Lipid A 4'-kinase</fullName>
    </alternativeName>
</protein>
<feature type="chain" id="PRO_1000049896" description="Tetraacyldisaccharide 4'-kinase">
    <location>
        <begin position="1"/>
        <end position="322"/>
    </location>
</feature>
<feature type="binding site" evidence="1">
    <location>
        <begin position="54"/>
        <end position="61"/>
    </location>
    <ligand>
        <name>ATP</name>
        <dbReference type="ChEBI" id="CHEBI:30616"/>
    </ligand>
</feature>
<accession>Q0BKJ4</accession>
<proteinExistence type="inferred from homology"/>